<name>P2SAF_CYAM1</name>
<gene>
    <name evidence="4" type="primary">HCF136</name>
    <name evidence="5" type="synonym">ycf48</name>
    <name evidence="8" type="ORF">CYME_CMO314C</name>
</gene>
<organism>
    <name type="scientific">Cyanidioschyzon merolae (strain NIES-3377 / 10D)</name>
    <name type="common">Unicellular red alga</name>
    <dbReference type="NCBI Taxonomy" id="280699"/>
    <lineage>
        <taxon>Eukaryota</taxon>
        <taxon>Rhodophyta</taxon>
        <taxon>Bangiophyceae</taxon>
        <taxon>Cyanidiales</taxon>
        <taxon>Cyanidiaceae</taxon>
        <taxon>Cyanidioschyzon</taxon>
    </lineage>
</organism>
<accession>M1VJU3</accession>
<protein>
    <recommendedName>
        <fullName evidence="6">Photosystem II stability/assembly factor HCF136, chloroplastic</fullName>
    </recommendedName>
    <alternativeName>
        <fullName evidence="5">Photosystem II assembly protein Ycf48</fullName>
    </alternativeName>
</protein>
<proteinExistence type="evidence at protein level"/>
<keyword id="KW-0002">3D-structure</keyword>
<keyword id="KW-0150">Chloroplast</keyword>
<keyword id="KW-0472">Membrane</keyword>
<keyword id="KW-0602">Photosynthesis</keyword>
<keyword id="KW-0604">Photosystem II</keyword>
<keyword id="KW-0934">Plastid</keyword>
<keyword id="KW-1185">Reference proteome</keyword>
<keyword id="KW-0793">Thylakoid</keyword>
<keyword id="KW-0809">Transit peptide</keyword>
<reference evidence="8" key="1">
    <citation type="journal article" date="2004" name="Nature">
        <title>Genome sequence of the ultrasmall unicellular red alga Cyanidioschyzon merolae 10D.</title>
        <authorList>
            <person name="Matsuzaki M."/>
            <person name="Misumi O."/>
            <person name="Shin-i T."/>
            <person name="Maruyama S."/>
            <person name="Takahara M."/>
            <person name="Miyagishima S."/>
            <person name="Mori T."/>
            <person name="Nishida K."/>
            <person name="Yagisawa F."/>
            <person name="Nishida K."/>
            <person name="Yoshida Y."/>
            <person name="Nishimura Y."/>
            <person name="Nakao S."/>
            <person name="Kobayashi T."/>
            <person name="Momoyama Y."/>
            <person name="Higashiyama T."/>
            <person name="Minoda A."/>
            <person name="Sano M."/>
            <person name="Nomoto H."/>
            <person name="Oishi K."/>
            <person name="Hayashi H."/>
            <person name="Ohta F."/>
            <person name="Nishizaka S."/>
            <person name="Haga S."/>
            <person name="Miura S."/>
            <person name="Morishita T."/>
            <person name="Kabeya Y."/>
            <person name="Terasawa K."/>
            <person name="Suzuki Y."/>
            <person name="Ishii Y."/>
            <person name="Asakawa S."/>
            <person name="Takano H."/>
            <person name="Ohta N."/>
            <person name="Kuroiwa H."/>
            <person name="Tanaka K."/>
            <person name="Shimizu N."/>
            <person name="Sugano S."/>
            <person name="Sato N."/>
            <person name="Nozaki H."/>
            <person name="Ogasawara N."/>
            <person name="Kohara Y."/>
            <person name="Kuroiwa T."/>
        </authorList>
    </citation>
    <scope>NUCLEOTIDE SEQUENCE [LARGE SCALE GENOMIC DNA]</scope>
    <source>
        <strain evidence="8">NIES-3377 / 10D</strain>
    </source>
</reference>
<reference evidence="8" key="2">
    <citation type="journal article" date="2007" name="BMC Biol.">
        <title>A 100%-complete sequence reveals unusually simple genomic features in the hot-spring red alga Cyanidioschyzon merolae.</title>
        <authorList>
            <person name="Nozaki H."/>
            <person name="Takano H."/>
            <person name="Misumi O."/>
            <person name="Terasawa K."/>
            <person name="Matsuzaki M."/>
            <person name="Maruyama S."/>
            <person name="Nishida K."/>
            <person name="Yagisawa F."/>
            <person name="Yoshida Y."/>
            <person name="Fujiwara T."/>
            <person name="Takio S."/>
            <person name="Tamura K."/>
            <person name="Chung S.J."/>
            <person name="Nakamura S."/>
            <person name="Kuroiwa H."/>
            <person name="Tanaka K."/>
            <person name="Sato N."/>
            <person name="Kuroiwa T."/>
        </authorList>
    </citation>
    <scope>NUCLEOTIDE SEQUENCE [LARGE SCALE GENOMIC DNA]</scope>
    <source>
        <strain evidence="8">NIES-3377 / 10D</strain>
    </source>
</reference>
<reference evidence="9" key="3">
    <citation type="journal article" date="2018" name="Proc. Natl. Acad. Sci. U.S.A.">
        <title>Ycf48 involved in the biogenesis of the oxygen-evolving photosystem II complex is a seven-bladed beta-propeller protein.</title>
        <authorList>
            <person name="Yu J."/>
            <person name="Knoppova J."/>
            <person name="Michoux F."/>
            <person name="Bialek W."/>
            <person name="Cota E."/>
            <person name="Shukla M.K."/>
            <person name="Straskova A."/>
            <person name="Pascual Aznar G."/>
            <person name="Sobotka R."/>
            <person name="Komenda J."/>
            <person name="Murray J.W."/>
            <person name="Nixon P.J."/>
        </authorList>
    </citation>
    <scope>X-RAY CRYSTALLOGRAPHY (2.98 ANGSTROMS)</scope>
    <scope>DOMAIN</scope>
    <source>
        <strain>NIES-3377 / 10D</strain>
    </source>
</reference>
<feature type="transit peptide" description="Chloroplast" evidence="6">
    <location>
        <begin position="1"/>
        <end status="unknown"/>
    </location>
</feature>
<feature type="transit peptide" description="Thylakoid" evidence="7">
    <location>
        <begin status="unknown"/>
        <end position="160"/>
    </location>
</feature>
<feature type="chain" id="PRO_0000456142" description="Photosystem II stability/assembly factor HCF136, chloroplastic" evidence="2">
    <location>
        <begin position="161"/>
        <end position="437"/>
    </location>
</feature>
<feature type="strand" evidence="10">
    <location>
        <begin position="109"/>
        <end position="111"/>
    </location>
</feature>
<feature type="strand" evidence="10">
    <location>
        <begin position="120"/>
        <end position="125"/>
    </location>
</feature>
<feature type="strand" evidence="10">
    <location>
        <begin position="127"/>
        <end position="129"/>
    </location>
</feature>
<feature type="strand" evidence="10">
    <location>
        <begin position="133"/>
        <end position="138"/>
    </location>
</feature>
<feature type="strand" evidence="10">
    <location>
        <begin position="142"/>
        <end position="150"/>
    </location>
</feature>
<feature type="strand" evidence="10">
    <location>
        <begin position="158"/>
        <end position="160"/>
    </location>
</feature>
<feature type="helix" evidence="10">
    <location>
        <begin position="164"/>
        <end position="166"/>
    </location>
</feature>
<feature type="strand" evidence="10">
    <location>
        <begin position="169"/>
        <end position="176"/>
    </location>
</feature>
<feature type="strand" evidence="10">
    <location>
        <begin position="179"/>
        <end position="185"/>
    </location>
</feature>
<feature type="strand" evidence="10">
    <location>
        <begin position="188"/>
        <end position="198"/>
    </location>
</feature>
<feature type="strand" evidence="10">
    <location>
        <begin position="200"/>
        <end position="202"/>
    </location>
</feature>
<feature type="strand" evidence="10">
    <location>
        <begin position="212"/>
        <end position="219"/>
    </location>
</feature>
<feature type="strand" evidence="10">
    <location>
        <begin position="222"/>
        <end position="227"/>
    </location>
</feature>
<feature type="strand" evidence="10">
    <location>
        <begin position="232"/>
        <end position="237"/>
    </location>
</feature>
<feature type="strand" evidence="10">
    <location>
        <begin position="243"/>
        <end position="245"/>
    </location>
</feature>
<feature type="helix" evidence="10">
    <location>
        <begin position="250"/>
        <end position="254"/>
    </location>
</feature>
<feature type="helix" evidence="10">
    <location>
        <begin position="262"/>
        <end position="265"/>
    </location>
</feature>
<feature type="strand" evidence="10">
    <location>
        <begin position="272"/>
        <end position="277"/>
    </location>
</feature>
<feature type="strand" evidence="10">
    <location>
        <begin position="283"/>
        <end position="287"/>
    </location>
</feature>
<feature type="strand" evidence="10">
    <location>
        <begin position="291"/>
        <end position="296"/>
    </location>
</feature>
<feature type="strand" evidence="10">
    <location>
        <begin position="304"/>
        <end position="307"/>
    </location>
</feature>
<feature type="strand" evidence="10">
    <location>
        <begin position="310"/>
        <end position="312"/>
    </location>
</feature>
<feature type="strand" evidence="10">
    <location>
        <begin position="314"/>
        <end position="319"/>
    </location>
</feature>
<feature type="helix" evidence="10">
    <location>
        <begin position="320"/>
        <end position="322"/>
    </location>
</feature>
<feature type="turn" evidence="10">
    <location>
        <begin position="324"/>
        <end position="326"/>
    </location>
</feature>
<feature type="strand" evidence="10">
    <location>
        <begin position="328"/>
        <end position="332"/>
    </location>
</feature>
<feature type="turn" evidence="10">
    <location>
        <begin position="333"/>
        <end position="335"/>
    </location>
</feature>
<feature type="strand" evidence="10">
    <location>
        <begin position="336"/>
        <end position="339"/>
    </location>
</feature>
<feature type="strand" evidence="10">
    <location>
        <begin position="366"/>
        <end position="375"/>
    </location>
</feature>
<feature type="strand" evidence="10">
    <location>
        <begin position="377"/>
        <end position="381"/>
    </location>
</feature>
<feature type="strand" evidence="10">
    <location>
        <begin position="386"/>
        <end position="391"/>
    </location>
</feature>
<feature type="turn" evidence="10">
    <location>
        <begin position="400"/>
        <end position="402"/>
    </location>
</feature>
<feature type="strand" evidence="10">
    <location>
        <begin position="405"/>
        <end position="407"/>
    </location>
</feature>
<feature type="strand" evidence="10">
    <location>
        <begin position="409"/>
        <end position="416"/>
    </location>
</feature>
<feature type="strand" evidence="10">
    <location>
        <begin position="420"/>
        <end position="425"/>
    </location>
</feature>
<feature type="strand" evidence="10">
    <location>
        <begin position="429"/>
        <end position="432"/>
    </location>
</feature>
<feature type="helix" evidence="10">
    <location>
        <begin position="434"/>
        <end position="436"/>
    </location>
</feature>
<comment type="function">
    <text evidence="1">Essential for photosystem II (PSII) biogenesis; required for assembly of an early intermediate in PSII assembly that includes D2 (psbD) and cytochrome b559.</text>
</comment>
<comment type="subcellular location">
    <subcellularLocation>
        <location evidence="1">Plastid</location>
        <location evidence="1">Chloroplast thylakoid membrane</location>
        <topology evidence="1">Peripheral membrane protein</topology>
        <orientation evidence="1">Lumenal side</orientation>
    </subcellularLocation>
    <text evidence="2">Predicted to be imported into the lumen by the Tat system. The position of the signal peptide cleavage has not been experimentally proven.</text>
</comment>
<comment type="domain">
    <text evidence="3">A 7-bladed beta-propeller torus, about 54 by 55 Angstroms, with a depth of about 25 Angstroms and a central pore.</text>
</comment>
<comment type="similarity">
    <text evidence="6">Belongs to the Ycf48 family.</text>
</comment>
<sequence>MTSVSVAFTNVAGLLAHGSKSRCRNAEVLRSRSAAERASGDRQRWRICMSDGERVHAYTETVVESQLGFSVSRRALLHHLALGALAVALPRSGALVAAPLAETVRGAAWKQVPLPTESVLFDIDFSQKDPNHGWLVGTRGLVLETRDGGETWEPRAFEDVEREEELNYRFSNVSFSGDEAWVIGKPPVMLRSTDGGKNWSRILLSPKLPGEPLLVTALGPNCAEMVTSSGAIYVTENGGINWKALVRETIDATLNRTISSGITGASYFTGSIVSVSRDVHGNYIAIPSRGNFFLTWVPGSDFWTPHARSTSRRISAIGFIQNDATKGIWETIRGGGLGFTKPNVNLNSTETIAFDMVDSKTGGYGILDVAFQDDRHVWAAVGGGSMYRSDDGGKTWRRDPLVSKVGANLYKIKFFGSQRGFVLGADGVLLKFHPENV</sequence>
<dbReference type="EMBL" id="AP006497">
    <property type="protein sequence ID" value="BAM81643.1"/>
    <property type="molecule type" value="Genomic_DNA"/>
</dbReference>
<dbReference type="RefSeq" id="XP_005537679.1">
    <property type="nucleotide sequence ID" value="XM_005537622.1"/>
</dbReference>
<dbReference type="PDB" id="5OJ3">
    <property type="method" value="X-ray"/>
    <property type="resolution" value="2.98 A"/>
    <property type="chains" value="A/B=1-437"/>
</dbReference>
<dbReference type="PDBsum" id="5OJ3"/>
<dbReference type="SMR" id="M1VJU3"/>
<dbReference type="STRING" id="280699.M1VJU3"/>
<dbReference type="EnsemblPlants" id="CMO314CT">
    <property type="protein sequence ID" value="CMO314CT"/>
    <property type="gene ID" value="CMO314C"/>
</dbReference>
<dbReference type="GeneID" id="16995794"/>
<dbReference type="Gramene" id="CMO314CT">
    <property type="protein sequence ID" value="CMO314CT"/>
    <property type="gene ID" value="CMO314C"/>
</dbReference>
<dbReference type="KEGG" id="cme:CYME_CMO314C"/>
<dbReference type="eggNOG" id="KOG3511">
    <property type="taxonomic scope" value="Eukaryota"/>
</dbReference>
<dbReference type="HOGENOM" id="CLU_057027_0_0_1"/>
<dbReference type="OMA" id="EGWIAGQ"/>
<dbReference type="OrthoDB" id="1878471at2759"/>
<dbReference type="Proteomes" id="UP000007014">
    <property type="component" value="Chromosome 15"/>
</dbReference>
<dbReference type="GO" id="GO:0009535">
    <property type="term" value="C:chloroplast thylakoid membrane"/>
    <property type="evidence" value="ECO:0007669"/>
    <property type="project" value="UniProtKB-SubCell"/>
</dbReference>
<dbReference type="GO" id="GO:0009523">
    <property type="term" value="C:photosystem II"/>
    <property type="evidence" value="ECO:0007669"/>
    <property type="project" value="UniProtKB-KW"/>
</dbReference>
<dbReference type="GO" id="GO:0015979">
    <property type="term" value="P:photosynthesis"/>
    <property type="evidence" value="ECO:0007669"/>
    <property type="project" value="UniProtKB-KW"/>
</dbReference>
<dbReference type="Gene3D" id="2.130.10.10">
    <property type="entry name" value="YVTN repeat-like/Quinoprotein amine dehydrogenase"/>
    <property type="match status" value="2"/>
</dbReference>
<dbReference type="InterPro" id="IPR028203">
    <property type="entry name" value="PSII_CF48-like_dom"/>
</dbReference>
<dbReference type="InterPro" id="IPR015943">
    <property type="entry name" value="WD40/YVTN_repeat-like_dom_sf"/>
</dbReference>
<dbReference type="NCBIfam" id="NF010237">
    <property type="entry name" value="PRK13684.1"/>
    <property type="match status" value="1"/>
</dbReference>
<dbReference type="PANTHER" id="PTHR47199">
    <property type="entry name" value="PHOTOSYSTEM II STABILITY/ASSEMBLY FACTOR HCF136, CHLOROPLASTIC"/>
    <property type="match status" value="1"/>
</dbReference>
<dbReference type="PANTHER" id="PTHR47199:SF2">
    <property type="entry name" value="PHOTOSYSTEM II STABILITY_ASSEMBLY FACTOR HCF136, CHLOROPLASTIC"/>
    <property type="match status" value="1"/>
</dbReference>
<dbReference type="Pfam" id="PF14870">
    <property type="entry name" value="PSII_BNR"/>
    <property type="match status" value="1"/>
</dbReference>
<dbReference type="SUPFAM" id="SSF110296">
    <property type="entry name" value="Oligoxyloglucan reducing end-specific cellobiohydrolase"/>
    <property type="match status" value="1"/>
</dbReference>
<evidence type="ECO:0000250" key="1">
    <source>
        <dbReference type="UniProtKB" id="O82660"/>
    </source>
</evidence>
<evidence type="ECO:0000255" key="2">
    <source>
        <dbReference type="PROSITE-ProRule" id="PRU00648"/>
    </source>
</evidence>
<evidence type="ECO:0000269" key="3">
    <source>
    </source>
</evidence>
<evidence type="ECO:0000303" key="4">
    <source>
    </source>
</evidence>
<evidence type="ECO:0000303" key="5">
    <source>
    </source>
</evidence>
<evidence type="ECO:0000305" key="6"/>
<evidence type="ECO:0000305" key="7">
    <source>
    </source>
</evidence>
<evidence type="ECO:0000312" key="8">
    <source>
        <dbReference type="EMBL" id="BAM81643.1"/>
    </source>
</evidence>
<evidence type="ECO:0007744" key="9">
    <source>
        <dbReference type="PDB" id="5OJ3"/>
    </source>
</evidence>
<evidence type="ECO:0007829" key="10">
    <source>
        <dbReference type="PDB" id="5OJ3"/>
    </source>
</evidence>